<accession>P97328</accession>
<accession>Q91WU8</accession>
<keyword id="KW-0002">3D-structure</keyword>
<keyword id="KW-0067">ATP-binding</keyword>
<keyword id="KW-0119">Carbohydrate metabolism</keyword>
<keyword id="KW-0418">Kinase</keyword>
<keyword id="KW-0547">Nucleotide-binding</keyword>
<keyword id="KW-1185">Reference proteome</keyword>
<keyword id="KW-0808">Transferase</keyword>
<comment type="function">
    <text evidence="2">Catalyzes the phosphorylation of the ketose sugar fructose to fructose-1-phosphate.</text>
</comment>
<comment type="catalytic activity">
    <reaction evidence="2">
        <text>beta-D-fructose + ATP = beta-D-fructose 1-phosphate + ADP + H(+)</text>
        <dbReference type="Rhea" id="RHEA:18145"/>
        <dbReference type="ChEBI" id="CHEBI:15378"/>
        <dbReference type="ChEBI" id="CHEBI:28645"/>
        <dbReference type="ChEBI" id="CHEBI:30616"/>
        <dbReference type="ChEBI" id="CHEBI:138881"/>
        <dbReference type="ChEBI" id="CHEBI:456216"/>
        <dbReference type="EC" id="2.7.1.3"/>
    </reaction>
</comment>
<comment type="activity regulation">
    <text evidence="1">Requires potassium. Inhibition by ADP (By similarity).</text>
</comment>
<comment type="pathway">
    <text>Carbohydrate metabolism; fructose metabolism.</text>
</comment>
<comment type="subunit">
    <text evidence="2">Homodimer.</text>
</comment>
<comment type="similarity">
    <text evidence="3">Belongs to the carbohydrate kinase PfkB family.</text>
</comment>
<feature type="chain" id="PRO_0000080089" description="Ketohexokinase">
    <location>
        <begin position="1"/>
        <end position="298"/>
    </location>
</feature>
<feature type="binding site" evidence="2">
    <location>
        <position position="15"/>
    </location>
    <ligand>
        <name>beta-D-fructose</name>
        <dbReference type="ChEBI" id="CHEBI:28645"/>
    </ligand>
</feature>
<feature type="binding site" evidence="2">
    <location>
        <position position="41"/>
    </location>
    <ligand>
        <name>beta-D-fructose</name>
        <dbReference type="ChEBI" id="CHEBI:28645"/>
    </ligand>
</feature>
<feature type="binding site" evidence="2">
    <location>
        <position position="42"/>
    </location>
    <ligand>
        <name>beta-D-fructose</name>
        <dbReference type="ChEBI" id="CHEBI:28645"/>
    </ligand>
</feature>
<feature type="binding site" evidence="2">
    <location>
        <position position="45"/>
    </location>
    <ligand>
        <name>beta-D-fructose</name>
        <dbReference type="ChEBI" id="CHEBI:28645"/>
    </ligand>
</feature>
<feature type="binding site" evidence="2">
    <location>
        <position position="108"/>
    </location>
    <ligand>
        <name>ATP</name>
        <dbReference type="ChEBI" id="CHEBI:30616"/>
    </ligand>
</feature>
<feature type="binding site" evidence="2">
    <location>
        <begin position="226"/>
        <end position="229"/>
    </location>
    <ligand>
        <name>ATP</name>
        <dbReference type="ChEBI" id="CHEBI:30616"/>
    </ligand>
</feature>
<feature type="binding site" evidence="2">
    <location>
        <begin position="255"/>
        <end position="258"/>
    </location>
    <ligand>
        <name>ATP</name>
        <dbReference type="ChEBI" id="CHEBI:30616"/>
    </ligand>
</feature>
<feature type="binding site" evidence="2">
    <location>
        <position position="258"/>
    </location>
    <ligand>
        <name>beta-D-fructose</name>
        <dbReference type="ChEBI" id="CHEBI:28645"/>
    </ligand>
</feature>
<feature type="sequence conflict" description="In Ref. 2; AAH13464." evidence="3" ref="2">
    <original>P</original>
    <variation>S</variation>
    <location>
        <position position="203"/>
    </location>
</feature>
<feature type="strand" evidence="5">
    <location>
        <begin position="5"/>
        <end position="10"/>
    </location>
</feature>
<feature type="strand" evidence="5">
    <location>
        <begin position="13"/>
        <end position="22"/>
    </location>
</feature>
<feature type="strand" evidence="7">
    <location>
        <begin position="29"/>
        <end position="31"/>
    </location>
</feature>
<feature type="strand" evidence="5">
    <location>
        <begin position="33"/>
        <end position="40"/>
    </location>
</feature>
<feature type="helix" evidence="5">
    <location>
        <begin position="42"/>
        <end position="53"/>
    </location>
</feature>
<feature type="strand" evidence="5">
    <location>
        <begin position="57"/>
        <end position="60"/>
    </location>
</feature>
<feature type="helix" evidence="5">
    <location>
        <begin position="67"/>
        <end position="79"/>
    </location>
</feature>
<feature type="strand" evidence="7">
    <location>
        <begin position="90"/>
        <end position="92"/>
    </location>
</feature>
<feature type="strand" evidence="5">
    <location>
        <begin position="96"/>
        <end position="102"/>
    </location>
</feature>
<feature type="turn" evidence="5">
    <location>
        <begin position="103"/>
        <end position="105"/>
    </location>
</feature>
<feature type="strand" evidence="5">
    <location>
        <begin position="108"/>
        <end position="111"/>
    </location>
</feature>
<feature type="strand" evidence="6">
    <location>
        <begin position="115"/>
        <end position="117"/>
    </location>
</feature>
<feature type="helix" evidence="5">
    <location>
        <begin position="122"/>
        <end position="126"/>
    </location>
</feature>
<feature type="helix" evidence="5">
    <location>
        <begin position="130"/>
        <end position="132"/>
    </location>
</feature>
<feature type="strand" evidence="5">
    <location>
        <begin position="133"/>
        <end position="142"/>
    </location>
</feature>
<feature type="helix" evidence="5">
    <location>
        <begin position="143"/>
        <end position="158"/>
    </location>
</feature>
<feature type="helix" evidence="5">
    <location>
        <begin position="162"/>
        <end position="164"/>
    </location>
</feature>
<feature type="strand" evidence="5">
    <location>
        <begin position="167"/>
        <end position="172"/>
    </location>
</feature>
<feature type="helix" evidence="5">
    <location>
        <begin position="177"/>
        <end position="184"/>
    </location>
</feature>
<feature type="strand" evidence="5">
    <location>
        <begin position="185"/>
        <end position="191"/>
    </location>
</feature>
<feature type="helix" evidence="5">
    <location>
        <begin position="193"/>
        <end position="198"/>
    </location>
</feature>
<feature type="helix" evidence="5">
    <location>
        <begin position="204"/>
        <end position="211"/>
    </location>
</feature>
<feature type="helix" evidence="5">
    <location>
        <begin position="212"/>
        <end position="214"/>
    </location>
</feature>
<feature type="strand" evidence="5">
    <location>
        <begin position="220"/>
        <end position="224"/>
    </location>
</feature>
<feature type="helix" evidence="5">
    <location>
        <begin position="226"/>
        <end position="228"/>
    </location>
</feature>
<feature type="strand" evidence="5">
    <location>
        <begin position="230"/>
        <end position="233"/>
    </location>
</feature>
<feature type="strand" evidence="5">
    <location>
        <begin position="239"/>
        <end position="242"/>
    </location>
</feature>
<feature type="helix" evidence="5">
    <location>
        <begin position="256"/>
        <end position="269"/>
    </location>
</feature>
<feature type="helix" evidence="5">
    <location>
        <begin position="274"/>
        <end position="288"/>
    </location>
</feature>
<feature type="strand" evidence="5">
    <location>
        <begin position="291"/>
        <end position="294"/>
    </location>
</feature>
<feature type="helix" evidence="5">
    <location>
        <begin position="295"/>
        <end position="297"/>
    </location>
</feature>
<proteinExistence type="evidence at protein level"/>
<evidence type="ECO:0000250" key="1"/>
<evidence type="ECO:0000250" key="2">
    <source>
        <dbReference type="UniProtKB" id="P50053"/>
    </source>
</evidence>
<evidence type="ECO:0000305" key="3"/>
<evidence type="ECO:0000312" key="4">
    <source>
        <dbReference type="MGI" id="MGI:1096353"/>
    </source>
</evidence>
<evidence type="ECO:0007829" key="5">
    <source>
        <dbReference type="PDB" id="6P2D"/>
    </source>
</evidence>
<evidence type="ECO:0007829" key="6">
    <source>
        <dbReference type="PDB" id="8OMD"/>
    </source>
</evidence>
<evidence type="ECO:0007829" key="7">
    <source>
        <dbReference type="PDB" id="8OMG"/>
    </source>
</evidence>
<protein>
    <recommendedName>
        <fullName evidence="4">Ketohexokinase</fullName>
        <ecNumber evidence="2">2.7.1.3</ecNumber>
    </recommendedName>
    <alternativeName>
        <fullName>Hepatic fructokinase</fullName>
    </alternativeName>
</protein>
<sequence length="298" mass="32750">MEEKQILCVGLVVLDIINVVDKYPEEDTDRRCLSQRWQRGGNASNSCTVLSLLGARCAFMGSLAPGHVADFLVADFRQRGVDVSQVTWQSQGDTPCSCCIVNNSNGSRTIILYDTNLPDVSAKDFEKVDLTRFKWIHIEGRNASEQVKMLQRIEEHNAKQPLPQKVRVSVEIEKPREELFQLFSYGEVVFVSKDVAKHLGFQPAVEALRGLYSRVKKGATLVCAWAEEGADALGPDGQLLHSDAFPPPRVVDTLGAGDTFNASVIFSLSKGNSMQEALRFGCQVAGKKCGLQGFDGIV</sequence>
<organism>
    <name type="scientific">Mus musculus</name>
    <name type="common">Mouse</name>
    <dbReference type="NCBI Taxonomy" id="10090"/>
    <lineage>
        <taxon>Eukaryota</taxon>
        <taxon>Metazoa</taxon>
        <taxon>Chordata</taxon>
        <taxon>Craniata</taxon>
        <taxon>Vertebrata</taxon>
        <taxon>Euteleostomi</taxon>
        <taxon>Mammalia</taxon>
        <taxon>Eutheria</taxon>
        <taxon>Euarchontoglires</taxon>
        <taxon>Glires</taxon>
        <taxon>Rodentia</taxon>
        <taxon>Myomorpha</taxon>
        <taxon>Muroidea</taxon>
        <taxon>Muridae</taxon>
        <taxon>Murinae</taxon>
        <taxon>Mus</taxon>
        <taxon>Mus</taxon>
    </lineage>
</organism>
<name>KHK_MOUSE</name>
<dbReference type="EC" id="2.7.1.3" evidence="2"/>
<dbReference type="EMBL" id="Y09335">
    <property type="protein sequence ID" value="CAA70515.1"/>
    <property type="molecule type" value="mRNA"/>
</dbReference>
<dbReference type="EMBL" id="BC013464">
    <property type="protein sequence ID" value="AAH13464.1"/>
    <property type="molecule type" value="mRNA"/>
</dbReference>
<dbReference type="CCDS" id="CCDS39050.1"/>
<dbReference type="RefSeq" id="NP_032465.2">
    <property type="nucleotide sequence ID" value="NM_008439.4"/>
</dbReference>
<dbReference type="PDB" id="6P2D">
    <property type="method" value="X-ray"/>
    <property type="resolution" value="1.79 A"/>
    <property type="chains" value="A=2-298"/>
</dbReference>
<dbReference type="PDB" id="8OMD">
    <property type="method" value="X-ray"/>
    <property type="resolution" value="2.00 A"/>
    <property type="chains" value="A/B/C/D=2-298"/>
</dbReference>
<dbReference type="PDB" id="8OMG">
    <property type="method" value="X-ray"/>
    <property type="resolution" value="1.82 A"/>
    <property type="chains" value="A/B=1-298"/>
</dbReference>
<dbReference type="PDBsum" id="6P2D"/>
<dbReference type="PDBsum" id="8OMD"/>
<dbReference type="PDBsum" id="8OMG"/>
<dbReference type="SMR" id="P97328"/>
<dbReference type="FunCoup" id="P97328">
    <property type="interactions" value="766"/>
</dbReference>
<dbReference type="IntAct" id="P97328">
    <property type="interactions" value="2"/>
</dbReference>
<dbReference type="STRING" id="10090.ENSMUSP00000031053"/>
<dbReference type="BindingDB" id="P97328"/>
<dbReference type="GlyGen" id="P97328">
    <property type="glycosylation" value="2 sites, 1 N-linked glycan (1 site), 1 O-linked glycan (1 site)"/>
</dbReference>
<dbReference type="iPTMnet" id="P97328"/>
<dbReference type="PhosphoSitePlus" id="P97328"/>
<dbReference type="SwissPalm" id="P97328"/>
<dbReference type="jPOST" id="P97328"/>
<dbReference type="PaxDb" id="10090-ENSMUSP00000031053"/>
<dbReference type="PeptideAtlas" id="P97328"/>
<dbReference type="ProteomicsDB" id="263597"/>
<dbReference type="DNASU" id="16548"/>
<dbReference type="GeneID" id="16548"/>
<dbReference type="KEGG" id="mmu:16548"/>
<dbReference type="UCSC" id="uc008wwn.1">
    <property type="organism name" value="mouse"/>
</dbReference>
<dbReference type="AGR" id="MGI:1096353"/>
<dbReference type="CTD" id="3795"/>
<dbReference type="MGI" id="MGI:1096353">
    <property type="gene designation" value="Khk"/>
</dbReference>
<dbReference type="eggNOG" id="KOG2947">
    <property type="taxonomic scope" value="Eukaryota"/>
</dbReference>
<dbReference type="InParanoid" id="P97328"/>
<dbReference type="OrthoDB" id="204058at2759"/>
<dbReference type="PhylomeDB" id="P97328"/>
<dbReference type="TreeFam" id="TF323942"/>
<dbReference type="BRENDA" id="2.7.1.3">
    <property type="organism ID" value="3474"/>
</dbReference>
<dbReference type="Reactome" id="R-MMU-70350">
    <property type="pathway name" value="Fructose catabolism"/>
</dbReference>
<dbReference type="UniPathway" id="UPA00202"/>
<dbReference type="BioGRID-ORCS" id="16548">
    <property type="hits" value="4 hits in 78 CRISPR screens"/>
</dbReference>
<dbReference type="ChiTaRS" id="Khk">
    <property type="organism name" value="mouse"/>
</dbReference>
<dbReference type="PRO" id="PR:P97328"/>
<dbReference type="Proteomes" id="UP000000589">
    <property type="component" value="Unplaced"/>
</dbReference>
<dbReference type="RNAct" id="P97328">
    <property type="molecule type" value="protein"/>
</dbReference>
<dbReference type="GO" id="GO:0005737">
    <property type="term" value="C:cytoplasm"/>
    <property type="evidence" value="ECO:0000314"/>
    <property type="project" value="MGI"/>
</dbReference>
<dbReference type="GO" id="GO:0005829">
    <property type="term" value="C:cytosol"/>
    <property type="evidence" value="ECO:0000314"/>
    <property type="project" value="MGI"/>
</dbReference>
<dbReference type="GO" id="GO:0005634">
    <property type="term" value="C:nucleus"/>
    <property type="evidence" value="ECO:0000314"/>
    <property type="project" value="MGI"/>
</dbReference>
<dbReference type="GO" id="GO:0005524">
    <property type="term" value="F:ATP binding"/>
    <property type="evidence" value="ECO:0007669"/>
    <property type="project" value="UniProtKB-KW"/>
</dbReference>
<dbReference type="GO" id="GO:0004454">
    <property type="term" value="F:ketohexokinase activity"/>
    <property type="evidence" value="ECO:0000314"/>
    <property type="project" value="MGI"/>
</dbReference>
<dbReference type="GO" id="GO:0006001">
    <property type="term" value="P:fructose catabolic process"/>
    <property type="evidence" value="ECO:0000314"/>
    <property type="project" value="MGI"/>
</dbReference>
<dbReference type="GO" id="GO:0061624">
    <property type="term" value="P:fructose catabolic process to hydroxyacetone phosphate and glyceraldehyde-3-phosphate"/>
    <property type="evidence" value="ECO:0000315"/>
    <property type="project" value="MGI"/>
</dbReference>
<dbReference type="GO" id="GO:0006000">
    <property type="term" value="P:fructose metabolic process"/>
    <property type="evidence" value="ECO:0000315"/>
    <property type="project" value="MGI"/>
</dbReference>
<dbReference type="GO" id="GO:0061625">
    <property type="term" value="P:glycolytic process through fructose-1-phosphate"/>
    <property type="evidence" value="ECO:0000305"/>
    <property type="project" value="MGI"/>
</dbReference>
<dbReference type="GO" id="GO:0070873">
    <property type="term" value="P:regulation of glycogen metabolic process"/>
    <property type="evidence" value="ECO:0000315"/>
    <property type="project" value="MGI"/>
</dbReference>
<dbReference type="CDD" id="cd01939">
    <property type="entry name" value="Ketohexokinase"/>
    <property type="match status" value="1"/>
</dbReference>
<dbReference type="FunFam" id="3.40.1190.20:FF:000018">
    <property type="entry name" value="Ketohexokinase"/>
    <property type="match status" value="1"/>
</dbReference>
<dbReference type="Gene3D" id="3.40.1190.20">
    <property type="match status" value="1"/>
</dbReference>
<dbReference type="InterPro" id="IPR052562">
    <property type="entry name" value="Ketohexokinase-related"/>
</dbReference>
<dbReference type="InterPro" id="IPR034093">
    <property type="entry name" value="KHK"/>
</dbReference>
<dbReference type="InterPro" id="IPR011611">
    <property type="entry name" value="PfkB_dom"/>
</dbReference>
<dbReference type="InterPro" id="IPR029056">
    <property type="entry name" value="Ribokinase-like"/>
</dbReference>
<dbReference type="PANTHER" id="PTHR42774:SF3">
    <property type="entry name" value="KETOHEXOKINASE"/>
    <property type="match status" value="1"/>
</dbReference>
<dbReference type="PANTHER" id="PTHR42774">
    <property type="entry name" value="PHOSPHOTRANSFERASE SYSTEM TRANSPORT PROTEIN"/>
    <property type="match status" value="1"/>
</dbReference>
<dbReference type="Pfam" id="PF00294">
    <property type="entry name" value="PfkB"/>
    <property type="match status" value="1"/>
</dbReference>
<dbReference type="SUPFAM" id="SSF53613">
    <property type="entry name" value="Ribokinase-like"/>
    <property type="match status" value="1"/>
</dbReference>
<gene>
    <name evidence="4" type="primary">Khk</name>
</gene>
<reference key="1">
    <citation type="submission" date="1996-11" db="EMBL/GenBank/DDBJ databases">
        <title>Structure and function of the fructokinase gene.</title>
        <authorList>
            <person name="Hayward B.E."/>
            <person name="Bonthron D.T."/>
        </authorList>
    </citation>
    <scope>NUCLEOTIDE SEQUENCE [MRNA]</scope>
</reference>
<reference key="2">
    <citation type="journal article" date="2004" name="Genome Res.">
        <title>The status, quality, and expansion of the NIH full-length cDNA project: the Mammalian Gene Collection (MGC).</title>
        <authorList>
            <consortium name="The MGC Project Team"/>
        </authorList>
    </citation>
    <scope>NUCLEOTIDE SEQUENCE [LARGE SCALE MRNA]</scope>
    <source>
        <tissue>Kidney</tissue>
    </source>
</reference>
<reference key="3">
    <citation type="journal article" date="2010" name="Cell">
        <title>A tissue-specific atlas of mouse protein phosphorylation and expression.</title>
        <authorList>
            <person name="Huttlin E.L."/>
            <person name="Jedrychowski M.P."/>
            <person name="Elias J.E."/>
            <person name="Goswami T."/>
            <person name="Rad R."/>
            <person name="Beausoleil S.A."/>
            <person name="Villen J."/>
            <person name="Haas W."/>
            <person name="Sowa M.E."/>
            <person name="Gygi S.P."/>
        </authorList>
    </citation>
    <scope>IDENTIFICATION BY MASS SPECTROMETRY [LARGE SCALE ANALYSIS]</scope>
    <source>
        <tissue>Brain</tissue>
        <tissue>Kidney</tissue>
        <tissue>Liver</tissue>
        <tissue>Pancreas</tissue>
    </source>
</reference>